<comment type="function">
    <text evidence="1">Catalyzes the conversion of 3-deoxy-D-arabino-heptulosonate 7-phosphate (DAHP) to dehydroquinate (DHQ).</text>
</comment>
<comment type="catalytic activity">
    <reaction evidence="1">
        <text>7-phospho-2-dehydro-3-deoxy-D-arabino-heptonate = 3-dehydroquinate + phosphate</text>
        <dbReference type="Rhea" id="RHEA:21968"/>
        <dbReference type="ChEBI" id="CHEBI:32364"/>
        <dbReference type="ChEBI" id="CHEBI:43474"/>
        <dbReference type="ChEBI" id="CHEBI:58394"/>
        <dbReference type="EC" id="4.2.3.4"/>
    </reaction>
</comment>
<comment type="cofactor">
    <cofactor evidence="1">
        <name>Co(2+)</name>
        <dbReference type="ChEBI" id="CHEBI:48828"/>
    </cofactor>
    <cofactor evidence="1">
        <name>Zn(2+)</name>
        <dbReference type="ChEBI" id="CHEBI:29105"/>
    </cofactor>
    <text evidence="1">Binds 1 divalent metal cation per subunit. Can use either Co(2+) or Zn(2+).</text>
</comment>
<comment type="cofactor">
    <cofactor evidence="1">
        <name>NAD(+)</name>
        <dbReference type="ChEBI" id="CHEBI:57540"/>
    </cofactor>
</comment>
<comment type="pathway">
    <text evidence="1">Metabolic intermediate biosynthesis; chorismate biosynthesis; chorismate from D-erythrose 4-phosphate and phosphoenolpyruvate: step 2/7.</text>
</comment>
<comment type="subcellular location">
    <subcellularLocation>
        <location evidence="1">Cytoplasm</location>
    </subcellularLocation>
</comment>
<comment type="similarity">
    <text evidence="1">Belongs to the sugar phosphate cyclases superfamily. Dehydroquinate synthase family.</text>
</comment>
<keyword id="KW-0028">Amino-acid biosynthesis</keyword>
<keyword id="KW-0057">Aromatic amino acid biosynthesis</keyword>
<keyword id="KW-0170">Cobalt</keyword>
<keyword id="KW-0963">Cytoplasm</keyword>
<keyword id="KW-0456">Lyase</keyword>
<keyword id="KW-0479">Metal-binding</keyword>
<keyword id="KW-0520">NAD</keyword>
<keyword id="KW-0547">Nucleotide-binding</keyword>
<keyword id="KW-0862">Zinc</keyword>
<protein>
    <recommendedName>
        <fullName evidence="1">3-dehydroquinate synthase</fullName>
        <shortName evidence="1">DHQS</shortName>
        <ecNumber evidence="1">4.2.3.4</ecNumber>
    </recommendedName>
</protein>
<dbReference type="EC" id="4.2.3.4" evidence="1"/>
<dbReference type="EMBL" id="CP000936">
    <property type="protein sequence ID" value="ACA35505.1"/>
    <property type="molecule type" value="Genomic_DNA"/>
</dbReference>
<dbReference type="RefSeq" id="WP_000702173.1">
    <property type="nucleotide sequence ID" value="NC_010380.1"/>
</dbReference>
<dbReference type="SMR" id="B1ICH6"/>
<dbReference type="KEGG" id="spv:SPH_1507"/>
<dbReference type="HOGENOM" id="CLU_001201_0_2_9"/>
<dbReference type="UniPathway" id="UPA00053">
    <property type="reaction ID" value="UER00085"/>
</dbReference>
<dbReference type="Proteomes" id="UP000002163">
    <property type="component" value="Chromosome"/>
</dbReference>
<dbReference type="GO" id="GO:0005737">
    <property type="term" value="C:cytoplasm"/>
    <property type="evidence" value="ECO:0007669"/>
    <property type="project" value="UniProtKB-SubCell"/>
</dbReference>
<dbReference type="GO" id="GO:0003856">
    <property type="term" value="F:3-dehydroquinate synthase activity"/>
    <property type="evidence" value="ECO:0007669"/>
    <property type="project" value="UniProtKB-UniRule"/>
</dbReference>
<dbReference type="GO" id="GO:0046872">
    <property type="term" value="F:metal ion binding"/>
    <property type="evidence" value="ECO:0007669"/>
    <property type="project" value="UniProtKB-KW"/>
</dbReference>
<dbReference type="GO" id="GO:0000166">
    <property type="term" value="F:nucleotide binding"/>
    <property type="evidence" value="ECO:0007669"/>
    <property type="project" value="UniProtKB-KW"/>
</dbReference>
<dbReference type="GO" id="GO:0008652">
    <property type="term" value="P:amino acid biosynthetic process"/>
    <property type="evidence" value="ECO:0007669"/>
    <property type="project" value="UniProtKB-KW"/>
</dbReference>
<dbReference type="GO" id="GO:0009073">
    <property type="term" value="P:aromatic amino acid family biosynthetic process"/>
    <property type="evidence" value="ECO:0007669"/>
    <property type="project" value="UniProtKB-KW"/>
</dbReference>
<dbReference type="GO" id="GO:0009423">
    <property type="term" value="P:chorismate biosynthetic process"/>
    <property type="evidence" value="ECO:0007669"/>
    <property type="project" value="UniProtKB-UniRule"/>
</dbReference>
<dbReference type="CDD" id="cd08195">
    <property type="entry name" value="DHQS"/>
    <property type="match status" value="1"/>
</dbReference>
<dbReference type="FunFam" id="1.20.1090.10:FF:000012">
    <property type="entry name" value="3-dehydroquinate synthase"/>
    <property type="match status" value="1"/>
</dbReference>
<dbReference type="FunFam" id="3.40.50.1970:FF:000001">
    <property type="entry name" value="3-dehydroquinate synthase"/>
    <property type="match status" value="1"/>
</dbReference>
<dbReference type="Gene3D" id="3.40.50.1970">
    <property type="match status" value="1"/>
</dbReference>
<dbReference type="Gene3D" id="1.20.1090.10">
    <property type="entry name" value="Dehydroquinate synthase-like - alpha domain"/>
    <property type="match status" value="1"/>
</dbReference>
<dbReference type="HAMAP" id="MF_00110">
    <property type="entry name" value="DHQ_synthase"/>
    <property type="match status" value="1"/>
</dbReference>
<dbReference type="InterPro" id="IPR050071">
    <property type="entry name" value="Dehydroquinate_synthase"/>
</dbReference>
<dbReference type="InterPro" id="IPR016037">
    <property type="entry name" value="DHQ_synth_AroB"/>
</dbReference>
<dbReference type="InterPro" id="IPR030963">
    <property type="entry name" value="DHQ_synth_fam"/>
</dbReference>
<dbReference type="InterPro" id="IPR030960">
    <property type="entry name" value="DHQS/DOIS_N"/>
</dbReference>
<dbReference type="InterPro" id="IPR056179">
    <property type="entry name" value="DHQS_C"/>
</dbReference>
<dbReference type="NCBIfam" id="TIGR01357">
    <property type="entry name" value="aroB"/>
    <property type="match status" value="1"/>
</dbReference>
<dbReference type="PANTHER" id="PTHR43622">
    <property type="entry name" value="3-DEHYDROQUINATE SYNTHASE"/>
    <property type="match status" value="1"/>
</dbReference>
<dbReference type="PANTHER" id="PTHR43622:SF7">
    <property type="entry name" value="3-DEHYDROQUINATE SYNTHASE, CHLOROPLASTIC"/>
    <property type="match status" value="1"/>
</dbReference>
<dbReference type="Pfam" id="PF01761">
    <property type="entry name" value="DHQ_synthase"/>
    <property type="match status" value="1"/>
</dbReference>
<dbReference type="Pfam" id="PF24621">
    <property type="entry name" value="DHQS_C"/>
    <property type="match status" value="1"/>
</dbReference>
<dbReference type="PIRSF" id="PIRSF001455">
    <property type="entry name" value="DHQ_synth"/>
    <property type="match status" value="1"/>
</dbReference>
<dbReference type="SUPFAM" id="SSF56796">
    <property type="entry name" value="Dehydroquinate synthase-like"/>
    <property type="match status" value="1"/>
</dbReference>
<name>AROB_STRPI</name>
<proteinExistence type="inferred from homology"/>
<organism>
    <name type="scientific">Streptococcus pneumoniae (strain Hungary19A-6)</name>
    <dbReference type="NCBI Taxonomy" id="487214"/>
    <lineage>
        <taxon>Bacteria</taxon>
        <taxon>Bacillati</taxon>
        <taxon>Bacillota</taxon>
        <taxon>Bacilli</taxon>
        <taxon>Lactobacillales</taxon>
        <taxon>Streptococcaceae</taxon>
        <taxon>Streptococcus</taxon>
    </lineage>
</organism>
<gene>
    <name evidence="1" type="primary">aroB</name>
    <name type="ordered locus">SPH_1507</name>
</gene>
<evidence type="ECO:0000255" key="1">
    <source>
        <dbReference type="HAMAP-Rule" id="MF_00110"/>
    </source>
</evidence>
<feature type="chain" id="PRO_1000094637" description="3-dehydroquinate synthase">
    <location>
        <begin position="1"/>
        <end position="355"/>
    </location>
</feature>
<feature type="binding site" evidence="1">
    <location>
        <begin position="71"/>
        <end position="76"/>
    </location>
    <ligand>
        <name>NAD(+)</name>
        <dbReference type="ChEBI" id="CHEBI:57540"/>
    </ligand>
</feature>
<feature type="binding site" evidence="1">
    <location>
        <begin position="105"/>
        <end position="109"/>
    </location>
    <ligand>
        <name>NAD(+)</name>
        <dbReference type="ChEBI" id="CHEBI:57540"/>
    </ligand>
</feature>
<feature type="binding site" evidence="1">
    <location>
        <begin position="129"/>
        <end position="130"/>
    </location>
    <ligand>
        <name>NAD(+)</name>
        <dbReference type="ChEBI" id="CHEBI:57540"/>
    </ligand>
</feature>
<feature type="binding site" evidence="1">
    <location>
        <position position="142"/>
    </location>
    <ligand>
        <name>NAD(+)</name>
        <dbReference type="ChEBI" id="CHEBI:57540"/>
    </ligand>
</feature>
<feature type="binding site" evidence="1">
    <location>
        <position position="151"/>
    </location>
    <ligand>
        <name>NAD(+)</name>
        <dbReference type="ChEBI" id="CHEBI:57540"/>
    </ligand>
</feature>
<feature type="binding site" evidence="1">
    <location>
        <position position="184"/>
    </location>
    <ligand>
        <name>Zn(2+)</name>
        <dbReference type="ChEBI" id="CHEBI:29105"/>
    </ligand>
</feature>
<feature type="binding site" evidence="1">
    <location>
        <position position="246"/>
    </location>
    <ligand>
        <name>Zn(2+)</name>
        <dbReference type="ChEBI" id="CHEBI:29105"/>
    </ligand>
</feature>
<feature type="binding site" evidence="1">
    <location>
        <position position="263"/>
    </location>
    <ligand>
        <name>Zn(2+)</name>
        <dbReference type="ChEBI" id="CHEBI:29105"/>
    </ligand>
</feature>
<reference key="1">
    <citation type="journal article" date="2010" name="Genome Biol.">
        <title>Structure and dynamics of the pan-genome of Streptococcus pneumoniae and closely related species.</title>
        <authorList>
            <person name="Donati C."/>
            <person name="Hiller N.L."/>
            <person name="Tettelin H."/>
            <person name="Muzzi A."/>
            <person name="Croucher N.J."/>
            <person name="Angiuoli S.V."/>
            <person name="Oggioni M."/>
            <person name="Dunning Hotopp J.C."/>
            <person name="Hu F.Z."/>
            <person name="Riley D.R."/>
            <person name="Covacci A."/>
            <person name="Mitchell T.J."/>
            <person name="Bentley S.D."/>
            <person name="Kilian M."/>
            <person name="Ehrlich G.D."/>
            <person name="Rappuoli R."/>
            <person name="Moxon E.R."/>
            <person name="Masignani V."/>
        </authorList>
    </citation>
    <scope>NUCLEOTIDE SEQUENCE [LARGE SCALE GENOMIC DNA]</scope>
    <source>
        <strain>Hungary19A-6</strain>
    </source>
</reference>
<accession>B1ICH6</accession>
<sequence>MKIRIDIPHHPYDIQIEKGCMAQAGQWLRELWQPQKVVIVTDNHVASLYAEKVKLSLEDAGFQVAVFDFLEGEERKNLTTVQKVYEFLVKQGLTRSDGIVALGGGVVGDLAGFVASTYMRGIHFVQIPTSLTAQVDSSIGGKTGVNTPFAKNMVGTFAQPDGVLIDPLVLETLGKRELIEGMGEVIKYGLIEDPELWALLTGLNGSVESILEHAETLIEHSCQVKRKMVVEDELDNGIRLYLNFGHTIGHAIEATAGYGKVMHGEAVAMGMVQISKVAEEKGLMPAGITQSITEMCQKFGLPVDYENWKVDKLYQALTHDKKARGNTLKLVLVPELGSATIHPVSLEEMKDYLVK</sequence>